<organism>
    <name type="scientific">Pseudoalteromonas translucida (strain TAC 125)</name>
    <dbReference type="NCBI Taxonomy" id="326442"/>
    <lineage>
        <taxon>Bacteria</taxon>
        <taxon>Pseudomonadati</taxon>
        <taxon>Pseudomonadota</taxon>
        <taxon>Gammaproteobacteria</taxon>
        <taxon>Alteromonadales</taxon>
        <taxon>Pseudoalteromonadaceae</taxon>
        <taxon>Pseudoalteromonas</taxon>
    </lineage>
</organism>
<dbReference type="EC" id="1.1.1.85" evidence="1"/>
<dbReference type="EMBL" id="CR954246">
    <property type="protein sequence ID" value="CAI87929.1"/>
    <property type="molecule type" value="Genomic_DNA"/>
</dbReference>
<dbReference type="SMR" id="Q3IJS3"/>
<dbReference type="STRING" id="326442.PSHAa2893"/>
<dbReference type="KEGG" id="pha:PSHAa2893"/>
<dbReference type="PATRIC" id="fig|326442.8.peg.2793"/>
<dbReference type="eggNOG" id="COG0473">
    <property type="taxonomic scope" value="Bacteria"/>
</dbReference>
<dbReference type="HOGENOM" id="CLU_031953_0_3_6"/>
<dbReference type="BioCyc" id="PHAL326442:PSHA_RS14200-MONOMER"/>
<dbReference type="UniPathway" id="UPA00048">
    <property type="reaction ID" value="UER00072"/>
</dbReference>
<dbReference type="Proteomes" id="UP000006843">
    <property type="component" value="Chromosome I"/>
</dbReference>
<dbReference type="GO" id="GO:0005829">
    <property type="term" value="C:cytosol"/>
    <property type="evidence" value="ECO:0007669"/>
    <property type="project" value="TreeGrafter"/>
</dbReference>
<dbReference type="GO" id="GO:0003862">
    <property type="term" value="F:3-isopropylmalate dehydrogenase activity"/>
    <property type="evidence" value="ECO:0007669"/>
    <property type="project" value="UniProtKB-UniRule"/>
</dbReference>
<dbReference type="GO" id="GO:0000287">
    <property type="term" value="F:magnesium ion binding"/>
    <property type="evidence" value="ECO:0007669"/>
    <property type="project" value="InterPro"/>
</dbReference>
<dbReference type="GO" id="GO:0051287">
    <property type="term" value="F:NAD binding"/>
    <property type="evidence" value="ECO:0007669"/>
    <property type="project" value="InterPro"/>
</dbReference>
<dbReference type="GO" id="GO:0009098">
    <property type="term" value="P:L-leucine biosynthetic process"/>
    <property type="evidence" value="ECO:0007669"/>
    <property type="project" value="UniProtKB-UniRule"/>
</dbReference>
<dbReference type="FunFam" id="3.40.718.10:FF:000006">
    <property type="entry name" value="3-isopropylmalate dehydrogenase"/>
    <property type="match status" value="1"/>
</dbReference>
<dbReference type="Gene3D" id="3.40.718.10">
    <property type="entry name" value="Isopropylmalate Dehydrogenase"/>
    <property type="match status" value="1"/>
</dbReference>
<dbReference type="HAMAP" id="MF_01033">
    <property type="entry name" value="LeuB_type1"/>
    <property type="match status" value="1"/>
</dbReference>
<dbReference type="InterPro" id="IPR019818">
    <property type="entry name" value="IsoCit/isopropylmalate_DH_CS"/>
</dbReference>
<dbReference type="InterPro" id="IPR024084">
    <property type="entry name" value="IsoPropMal-DH-like_dom"/>
</dbReference>
<dbReference type="InterPro" id="IPR004429">
    <property type="entry name" value="Isopropylmalate_DH"/>
</dbReference>
<dbReference type="NCBIfam" id="TIGR00169">
    <property type="entry name" value="leuB"/>
    <property type="match status" value="1"/>
</dbReference>
<dbReference type="PANTHER" id="PTHR42979">
    <property type="entry name" value="3-ISOPROPYLMALATE DEHYDROGENASE"/>
    <property type="match status" value="1"/>
</dbReference>
<dbReference type="PANTHER" id="PTHR42979:SF1">
    <property type="entry name" value="3-ISOPROPYLMALATE DEHYDROGENASE"/>
    <property type="match status" value="1"/>
</dbReference>
<dbReference type="Pfam" id="PF00180">
    <property type="entry name" value="Iso_dh"/>
    <property type="match status" value="1"/>
</dbReference>
<dbReference type="SMART" id="SM01329">
    <property type="entry name" value="Iso_dh"/>
    <property type="match status" value="1"/>
</dbReference>
<dbReference type="SUPFAM" id="SSF53659">
    <property type="entry name" value="Isocitrate/Isopropylmalate dehydrogenase-like"/>
    <property type="match status" value="1"/>
</dbReference>
<dbReference type="PROSITE" id="PS00470">
    <property type="entry name" value="IDH_IMDH"/>
    <property type="match status" value="1"/>
</dbReference>
<comment type="function">
    <text evidence="1">Catalyzes the oxidation of 3-carboxy-2-hydroxy-4-methylpentanoate (3-isopropylmalate) to 3-carboxy-4-methyl-2-oxopentanoate. The product decarboxylates to 4-methyl-2 oxopentanoate.</text>
</comment>
<comment type="catalytic activity">
    <reaction evidence="1">
        <text>(2R,3S)-3-isopropylmalate + NAD(+) = 4-methyl-2-oxopentanoate + CO2 + NADH</text>
        <dbReference type="Rhea" id="RHEA:32271"/>
        <dbReference type="ChEBI" id="CHEBI:16526"/>
        <dbReference type="ChEBI" id="CHEBI:17865"/>
        <dbReference type="ChEBI" id="CHEBI:35121"/>
        <dbReference type="ChEBI" id="CHEBI:57540"/>
        <dbReference type="ChEBI" id="CHEBI:57945"/>
        <dbReference type="EC" id="1.1.1.85"/>
    </reaction>
</comment>
<comment type="cofactor">
    <cofactor evidence="1">
        <name>Mg(2+)</name>
        <dbReference type="ChEBI" id="CHEBI:18420"/>
    </cofactor>
    <cofactor evidence="1">
        <name>Mn(2+)</name>
        <dbReference type="ChEBI" id="CHEBI:29035"/>
    </cofactor>
    <text evidence="1">Binds 1 Mg(2+) or Mn(2+) ion per subunit.</text>
</comment>
<comment type="pathway">
    <text evidence="1">Amino-acid biosynthesis; L-leucine biosynthesis; L-leucine from 3-methyl-2-oxobutanoate: step 3/4.</text>
</comment>
<comment type="subunit">
    <text evidence="1">Homodimer.</text>
</comment>
<comment type="subcellular location">
    <subcellularLocation>
        <location evidence="1">Cytoplasm</location>
    </subcellularLocation>
</comment>
<comment type="similarity">
    <text evidence="1">Belongs to the isocitrate and isopropylmalate dehydrogenases family. LeuB type 1 subfamily.</text>
</comment>
<protein>
    <recommendedName>
        <fullName evidence="1">3-isopropylmalate dehydrogenase</fullName>
        <ecNumber evidence="1">1.1.1.85</ecNumber>
    </recommendedName>
    <alternativeName>
        <fullName evidence="1">3-IPM-DH</fullName>
    </alternativeName>
    <alternativeName>
        <fullName evidence="1">Beta-IPM dehydrogenase</fullName>
        <shortName evidence="1">IMDH</shortName>
    </alternativeName>
</protein>
<evidence type="ECO:0000255" key="1">
    <source>
        <dbReference type="HAMAP-Rule" id="MF_01033"/>
    </source>
</evidence>
<proteinExistence type="inferred from homology"/>
<gene>
    <name evidence="1" type="primary">leuB</name>
    <name type="ordered locus">PSHAa2893</name>
</gene>
<feature type="chain" id="PRO_0000083726" description="3-isopropylmalate dehydrogenase">
    <location>
        <begin position="1"/>
        <end position="358"/>
    </location>
</feature>
<feature type="binding site" evidence="1">
    <location>
        <begin position="79"/>
        <end position="92"/>
    </location>
    <ligand>
        <name>NAD(+)</name>
        <dbReference type="ChEBI" id="CHEBI:57540"/>
    </ligand>
</feature>
<feature type="binding site" evidence="1">
    <location>
        <position position="100"/>
    </location>
    <ligand>
        <name>substrate</name>
    </ligand>
</feature>
<feature type="binding site" evidence="1">
    <location>
        <position position="110"/>
    </location>
    <ligand>
        <name>substrate</name>
    </ligand>
</feature>
<feature type="binding site" evidence="1">
    <location>
        <position position="139"/>
    </location>
    <ligand>
        <name>substrate</name>
    </ligand>
</feature>
<feature type="binding site" evidence="1">
    <location>
        <position position="227"/>
    </location>
    <ligand>
        <name>Mg(2+)</name>
        <dbReference type="ChEBI" id="CHEBI:18420"/>
    </ligand>
</feature>
<feature type="binding site" evidence="1">
    <location>
        <position position="227"/>
    </location>
    <ligand>
        <name>substrate</name>
    </ligand>
</feature>
<feature type="binding site" evidence="1">
    <location>
        <position position="251"/>
    </location>
    <ligand>
        <name>Mg(2+)</name>
        <dbReference type="ChEBI" id="CHEBI:18420"/>
    </ligand>
</feature>
<feature type="binding site" evidence="1">
    <location>
        <position position="255"/>
    </location>
    <ligand>
        <name>Mg(2+)</name>
        <dbReference type="ChEBI" id="CHEBI:18420"/>
    </ligand>
</feature>
<feature type="binding site" evidence="1">
    <location>
        <begin position="285"/>
        <end position="297"/>
    </location>
    <ligand>
        <name>NAD(+)</name>
        <dbReference type="ChEBI" id="CHEBI:57540"/>
    </ligand>
</feature>
<feature type="site" description="Important for catalysis" evidence="1">
    <location>
        <position position="146"/>
    </location>
</feature>
<feature type="site" description="Important for catalysis" evidence="1">
    <location>
        <position position="195"/>
    </location>
</feature>
<reference key="1">
    <citation type="journal article" date="2005" name="Genome Res.">
        <title>Coping with cold: the genome of the versatile marine Antarctica bacterium Pseudoalteromonas haloplanktis TAC125.</title>
        <authorList>
            <person name="Medigue C."/>
            <person name="Krin E."/>
            <person name="Pascal G."/>
            <person name="Barbe V."/>
            <person name="Bernsel A."/>
            <person name="Bertin P.N."/>
            <person name="Cheung F."/>
            <person name="Cruveiller S."/>
            <person name="D'Amico S."/>
            <person name="Duilio A."/>
            <person name="Fang G."/>
            <person name="Feller G."/>
            <person name="Ho C."/>
            <person name="Mangenot S."/>
            <person name="Marino G."/>
            <person name="Nilsson J."/>
            <person name="Parrilli E."/>
            <person name="Rocha E.P.C."/>
            <person name="Rouy Z."/>
            <person name="Sekowska A."/>
            <person name="Tutino M.L."/>
            <person name="Vallenet D."/>
            <person name="von Heijne G."/>
            <person name="Danchin A."/>
        </authorList>
    </citation>
    <scope>NUCLEOTIDE SEQUENCE [LARGE SCALE GENOMIC DNA]</scope>
    <source>
        <strain>TAC 125</strain>
    </source>
</reference>
<accession>Q3IJS3</accession>
<keyword id="KW-0028">Amino-acid biosynthesis</keyword>
<keyword id="KW-0100">Branched-chain amino acid biosynthesis</keyword>
<keyword id="KW-0963">Cytoplasm</keyword>
<keyword id="KW-0432">Leucine biosynthesis</keyword>
<keyword id="KW-0460">Magnesium</keyword>
<keyword id="KW-0464">Manganese</keyword>
<keyword id="KW-0479">Metal-binding</keyword>
<keyword id="KW-0520">NAD</keyword>
<keyword id="KW-0560">Oxidoreductase</keyword>
<keyword id="KW-1185">Reference proteome</keyword>
<sequence>MSKTNYSVAVLAGDGIGPEIMAAAEQVLDAVSNKFGFTLNREHHAIGGAAIDKHGKALPQSTVTACENADAILFGAVGGPKWEHLPPDEQPERGSLLPLRKHFGLFCNLRPAQLLPALSTASPLRADISEQGFDILCVRELTGGIYFGEKGRSGEGENESAFDTQRYSRKEIERIARFAFEAAKLRSSHVTSVDKANVLASSVLWREVVTEVSKDYPEVKLDYIYVDNAAMQLVKQPSQFDVLLCDNLFGDILSDECAMITGSMGLLPSASLNQSGFGLYEPAGGSAPDIAGKGVANPIAQILSAALMLRYSLGQDEAARTIEKAVAEAVAAGVGTPDIFPNAGYTTNDVAAAIVARI</sequence>
<name>LEU3_PSET1</name>